<comment type="function">
    <text evidence="1">Single strand-specific metallo-endoribonuclease involved in late-stage 70S ribosome quality control and in maturation of the 3' terminus of the 16S rRNA.</text>
</comment>
<comment type="cofactor">
    <cofactor evidence="1">
        <name>Zn(2+)</name>
        <dbReference type="ChEBI" id="CHEBI:29105"/>
    </cofactor>
    <text evidence="1">Binds 1 zinc ion.</text>
</comment>
<comment type="subcellular location">
    <subcellularLocation>
        <location evidence="1">Cytoplasm</location>
    </subcellularLocation>
</comment>
<comment type="similarity">
    <text evidence="1">Belongs to the endoribonuclease YbeY family.</text>
</comment>
<evidence type="ECO:0000255" key="1">
    <source>
        <dbReference type="HAMAP-Rule" id="MF_00009"/>
    </source>
</evidence>
<name>YBEY_SULSY</name>
<reference key="1">
    <citation type="journal article" date="2009" name="J. Bacteriol.">
        <title>Complete and draft genome sequences of six members of the Aquificales.</title>
        <authorList>
            <person name="Reysenbach A.-L."/>
            <person name="Hamamura N."/>
            <person name="Podar M."/>
            <person name="Griffiths E."/>
            <person name="Ferreira S."/>
            <person name="Hochstein R."/>
            <person name="Heidelberg J."/>
            <person name="Johnson J."/>
            <person name="Mead D."/>
            <person name="Pohorille A."/>
            <person name="Sarmiento M."/>
            <person name="Schweighofer K."/>
            <person name="Seshadri R."/>
            <person name="Voytek M.A."/>
        </authorList>
    </citation>
    <scope>NUCLEOTIDE SEQUENCE [LARGE SCALE GENOMIC DNA]</scope>
    <source>
        <strain>YO3AOP1</strain>
    </source>
</reference>
<accession>B2V7H6</accession>
<sequence>MKNKTQKNRILINKEVYSKEITKKFLKDITEKILSELNLNNVEISITLTDNERIREINKEWRGKDKPTDVLSFPQDETIGYKYRLLGDVIISLPYAKAQAEEIGLTLREEVLRLLVHGILHLLGYDHETNEEDAKIMFDLQDKIFDKLTCEL</sequence>
<dbReference type="EC" id="3.1.-.-" evidence="1"/>
<dbReference type="EMBL" id="CP001080">
    <property type="protein sequence ID" value="ACD65899.1"/>
    <property type="molecule type" value="Genomic_DNA"/>
</dbReference>
<dbReference type="RefSeq" id="WP_012458988.1">
    <property type="nucleotide sequence ID" value="NC_010730.1"/>
</dbReference>
<dbReference type="SMR" id="B2V7H6"/>
<dbReference type="STRING" id="436114.SYO3AOP1_0254"/>
<dbReference type="KEGG" id="sul:SYO3AOP1_0254"/>
<dbReference type="eggNOG" id="COG0319">
    <property type="taxonomic scope" value="Bacteria"/>
</dbReference>
<dbReference type="HOGENOM" id="CLU_106710_3_3_0"/>
<dbReference type="GO" id="GO:0005737">
    <property type="term" value="C:cytoplasm"/>
    <property type="evidence" value="ECO:0007669"/>
    <property type="project" value="UniProtKB-SubCell"/>
</dbReference>
<dbReference type="GO" id="GO:0004222">
    <property type="term" value="F:metalloendopeptidase activity"/>
    <property type="evidence" value="ECO:0007669"/>
    <property type="project" value="InterPro"/>
</dbReference>
<dbReference type="GO" id="GO:0004521">
    <property type="term" value="F:RNA endonuclease activity"/>
    <property type="evidence" value="ECO:0007669"/>
    <property type="project" value="UniProtKB-UniRule"/>
</dbReference>
<dbReference type="GO" id="GO:0008270">
    <property type="term" value="F:zinc ion binding"/>
    <property type="evidence" value="ECO:0007669"/>
    <property type="project" value="UniProtKB-UniRule"/>
</dbReference>
<dbReference type="GO" id="GO:0006364">
    <property type="term" value="P:rRNA processing"/>
    <property type="evidence" value="ECO:0007669"/>
    <property type="project" value="UniProtKB-UniRule"/>
</dbReference>
<dbReference type="Gene3D" id="3.40.390.30">
    <property type="entry name" value="Metalloproteases ('zincins'), catalytic domain"/>
    <property type="match status" value="1"/>
</dbReference>
<dbReference type="HAMAP" id="MF_00009">
    <property type="entry name" value="Endoribonucl_YbeY"/>
    <property type="match status" value="1"/>
</dbReference>
<dbReference type="InterPro" id="IPR023091">
    <property type="entry name" value="MetalPrtase_cat_dom_sf_prd"/>
</dbReference>
<dbReference type="InterPro" id="IPR002036">
    <property type="entry name" value="YbeY"/>
</dbReference>
<dbReference type="InterPro" id="IPR020549">
    <property type="entry name" value="YbeY_CS"/>
</dbReference>
<dbReference type="NCBIfam" id="TIGR00043">
    <property type="entry name" value="rRNA maturation RNase YbeY"/>
    <property type="match status" value="1"/>
</dbReference>
<dbReference type="PANTHER" id="PTHR46986">
    <property type="entry name" value="ENDORIBONUCLEASE YBEY, CHLOROPLASTIC"/>
    <property type="match status" value="1"/>
</dbReference>
<dbReference type="PANTHER" id="PTHR46986:SF1">
    <property type="entry name" value="ENDORIBONUCLEASE YBEY, CHLOROPLASTIC"/>
    <property type="match status" value="1"/>
</dbReference>
<dbReference type="Pfam" id="PF02130">
    <property type="entry name" value="YbeY"/>
    <property type="match status" value="1"/>
</dbReference>
<dbReference type="SUPFAM" id="SSF55486">
    <property type="entry name" value="Metalloproteases ('zincins'), catalytic domain"/>
    <property type="match status" value="1"/>
</dbReference>
<dbReference type="PROSITE" id="PS01306">
    <property type="entry name" value="UPF0054"/>
    <property type="match status" value="1"/>
</dbReference>
<proteinExistence type="inferred from homology"/>
<keyword id="KW-0963">Cytoplasm</keyword>
<keyword id="KW-0255">Endonuclease</keyword>
<keyword id="KW-0378">Hydrolase</keyword>
<keyword id="KW-0479">Metal-binding</keyword>
<keyword id="KW-0540">Nuclease</keyword>
<keyword id="KW-0690">Ribosome biogenesis</keyword>
<keyword id="KW-0698">rRNA processing</keyword>
<keyword id="KW-0862">Zinc</keyword>
<protein>
    <recommendedName>
        <fullName evidence="1">Endoribonuclease YbeY</fullName>
        <ecNumber evidence="1">3.1.-.-</ecNumber>
    </recommendedName>
</protein>
<feature type="chain" id="PRO_1000089219" description="Endoribonuclease YbeY">
    <location>
        <begin position="1"/>
        <end position="152"/>
    </location>
</feature>
<feature type="binding site" evidence="1">
    <location>
        <position position="117"/>
    </location>
    <ligand>
        <name>Zn(2+)</name>
        <dbReference type="ChEBI" id="CHEBI:29105"/>
        <note>catalytic</note>
    </ligand>
</feature>
<feature type="binding site" evidence="1">
    <location>
        <position position="121"/>
    </location>
    <ligand>
        <name>Zn(2+)</name>
        <dbReference type="ChEBI" id="CHEBI:29105"/>
        <note>catalytic</note>
    </ligand>
</feature>
<feature type="binding site" evidence="1">
    <location>
        <position position="127"/>
    </location>
    <ligand>
        <name>Zn(2+)</name>
        <dbReference type="ChEBI" id="CHEBI:29105"/>
        <note>catalytic</note>
    </ligand>
</feature>
<organism>
    <name type="scientific">Sulfurihydrogenibium sp. (strain YO3AOP1)</name>
    <dbReference type="NCBI Taxonomy" id="436114"/>
    <lineage>
        <taxon>Bacteria</taxon>
        <taxon>Pseudomonadati</taxon>
        <taxon>Aquificota</taxon>
        <taxon>Aquificia</taxon>
        <taxon>Aquificales</taxon>
        <taxon>Hydrogenothermaceae</taxon>
        <taxon>Sulfurihydrogenibium</taxon>
    </lineage>
</organism>
<gene>
    <name evidence="1" type="primary">ybeY</name>
    <name type="ordered locus">SYO3AOP1_0254</name>
</gene>